<sequence length="304" mass="32287">MSHGPTRKHTALPKAQILIEALPWLTRHNGKTVVVKFGGNAMIDEELKAAFAQDIVFLHHAGLKPVVVHGGGPQISAALDRHGIVSEFKAGLRVTTEDAMDVVRMVLAGQVQRELVGLLNQHGPLAVGLTGEDAHTITATKHQPEIDGELVDIGRVGEITEIDTGAIEALLADGRIPVVSSIARSQDDGHVYNVNADTAAAALAAALGAETLMVLTDVEGLYEDWPDSDEVISRLTASELEKLLPELASGMVPKMEGCLHAVRNGVTTARVIDGRVQHSILLEIFTDEGIGTMVVPDEEEGDAV</sequence>
<organism>
    <name type="scientific">Streptomyces avermitilis (strain ATCC 31267 / DSM 46492 / JCM 5070 / NBRC 14893 / NCIMB 12804 / NRRL 8165 / MA-4680)</name>
    <dbReference type="NCBI Taxonomy" id="227882"/>
    <lineage>
        <taxon>Bacteria</taxon>
        <taxon>Bacillati</taxon>
        <taxon>Actinomycetota</taxon>
        <taxon>Actinomycetes</taxon>
        <taxon>Kitasatosporales</taxon>
        <taxon>Streptomycetaceae</taxon>
        <taxon>Streptomyces</taxon>
    </lineage>
</organism>
<keyword id="KW-0028">Amino-acid biosynthesis</keyword>
<keyword id="KW-0055">Arginine biosynthesis</keyword>
<keyword id="KW-0067">ATP-binding</keyword>
<keyword id="KW-0963">Cytoplasm</keyword>
<keyword id="KW-0418">Kinase</keyword>
<keyword id="KW-0547">Nucleotide-binding</keyword>
<keyword id="KW-1185">Reference proteome</keyword>
<keyword id="KW-0808">Transferase</keyword>
<reference key="1">
    <citation type="journal article" date="2001" name="Proc. Natl. Acad. Sci. U.S.A.">
        <title>Genome sequence of an industrial microorganism Streptomyces avermitilis: deducing the ability of producing secondary metabolites.</title>
        <authorList>
            <person name="Omura S."/>
            <person name="Ikeda H."/>
            <person name="Ishikawa J."/>
            <person name="Hanamoto A."/>
            <person name="Takahashi C."/>
            <person name="Shinose M."/>
            <person name="Takahashi Y."/>
            <person name="Horikawa H."/>
            <person name="Nakazawa H."/>
            <person name="Osonoe T."/>
            <person name="Kikuchi H."/>
            <person name="Shiba T."/>
            <person name="Sakaki Y."/>
            <person name="Hattori M."/>
        </authorList>
    </citation>
    <scope>NUCLEOTIDE SEQUENCE [LARGE SCALE GENOMIC DNA]</scope>
    <source>
        <strain>ATCC 31267 / DSM 46492 / JCM 5070 / NBRC 14893 / NCIMB 12804 / NRRL 8165 / MA-4680</strain>
    </source>
</reference>
<reference key="2">
    <citation type="journal article" date="2003" name="Nat. Biotechnol.">
        <title>Complete genome sequence and comparative analysis of the industrial microorganism Streptomyces avermitilis.</title>
        <authorList>
            <person name="Ikeda H."/>
            <person name="Ishikawa J."/>
            <person name="Hanamoto A."/>
            <person name="Shinose M."/>
            <person name="Kikuchi H."/>
            <person name="Shiba T."/>
            <person name="Sakaki Y."/>
            <person name="Hattori M."/>
            <person name="Omura S."/>
        </authorList>
    </citation>
    <scope>NUCLEOTIDE SEQUENCE [LARGE SCALE GENOMIC DNA]</scope>
    <source>
        <strain>ATCC 31267 / DSM 46492 / JCM 5070 / NBRC 14893 / NCIMB 12804 / NRRL 8165 / MA-4680</strain>
    </source>
</reference>
<protein>
    <recommendedName>
        <fullName evidence="1">Acetylglutamate kinase</fullName>
        <ecNumber evidence="1">2.7.2.8</ecNumber>
    </recommendedName>
    <alternativeName>
        <fullName evidence="1">N-acetyl-L-glutamate 5-phosphotransferase</fullName>
    </alternativeName>
    <alternativeName>
        <fullName evidence="1">NAG kinase</fullName>
        <shortName evidence="1">NAGK</shortName>
    </alternativeName>
</protein>
<proteinExistence type="inferred from homology"/>
<dbReference type="EC" id="2.7.2.8" evidence="1"/>
<dbReference type="EMBL" id="BA000030">
    <property type="protein sequence ID" value="BAC74476.1"/>
    <property type="molecule type" value="Genomic_DNA"/>
</dbReference>
<dbReference type="RefSeq" id="WP_010988164.1">
    <property type="nucleotide sequence ID" value="NZ_JZJK01000082.1"/>
</dbReference>
<dbReference type="SMR" id="Q828A4"/>
<dbReference type="GeneID" id="41543833"/>
<dbReference type="KEGG" id="sma:SAVERM_6765"/>
<dbReference type="eggNOG" id="COG0548">
    <property type="taxonomic scope" value="Bacteria"/>
</dbReference>
<dbReference type="HOGENOM" id="CLU_053680_0_1_11"/>
<dbReference type="OrthoDB" id="9803155at2"/>
<dbReference type="UniPathway" id="UPA00068">
    <property type="reaction ID" value="UER00107"/>
</dbReference>
<dbReference type="Proteomes" id="UP000000428">
    <property type="component" value="Chromosome"/>
</dbReference>
<dbReference type="GO" id="GO:0005737">
    <property type="term" value="C:cytoplasm"/>
    <property type="evidence" value="ECO:0007669"/>
    <property type="project" value="UniProtKB-SubCell"/>
</dbReference>
<dbReference type="GO" id="GO:0003991">
    <property type="term" value="F:acetylglutamate kinase activity"/>
    <property type="evidence" value="ECO:0007669"/>
    <property type="project" value="UniProtKB-UniRule"/>
</dbReference>
<dbReference type="GO" id="GO:0005524">
    <property type="term" value="F:ATP binding"/>
    <property type="evidence" value="ECO:0007669"/>
    <property type="project" value="UniProtKB-UniRule"/>
</dbReference>
<dbReference type="GO" id="GO:0042450">
    <property type="term" value="P:arginine biosynthetic process via ornithine"/>
    <property type="evidence" value="ECO:0007669"/>
    <property type="project" value="UniProtKB-UniRule"/>
</dbReference>
<dbReference type="GO" id="GO:0006526">
    <property type="term" value="P:L-arginine biosynthetic process"/>
    <property type="evidence" value="ECO:0007669"/>
    <property type="project" value="UniProtKB-UniPathway"/>
</dbReference>
<dbReference type="CDD" id="cd04250">
    <property type="entry name" value="AAK_NAGK-C"/>
    <property type="match status" value="1"/>
</dbReference>
<dbReference type="FunFam" id="3.40.1160.10:FF:000015">
    <property type="entry name" value="Acetylglutamate kinase"/>
    <property type="match status" value="1"/>
</dbReference>
<dbReference type="Gene3D" id="3.40.1160.10">
    <property type="entry name" value="Acetylglutamate kinase-like"/>
    <property type="match status" value="1"/>
</dbReference>
<dbReference type="HAMAP" id="MF_00082">
    <property type="entry name" value="ArgB"/>
    <property type="match status" value="1"/>
</dbReference>
<dbReference type="InterPro" id="IPR036393">
    <property type="entry name" value="AceGlu_kinase-like_sf"/>
</dbReference>
<dbReference type="InterPro" id="IPR004662">
    <property type="entry name" value="AcgluKinase_fam"/>
</dbReference>
<dbReference type="InterPro" id="IPR037528">
    <property type="entry name" value="ArgB"/>
</dbReference>
<dbReference type="InterPro" id="IPR001048">
    <property type="entry name" value="Asp/Glu/Uridylate_kinase"/>
</dbReference>
<dbReference type="InterPro" id="IPR001057">
    <property type="entry name" value="Glu/AcGlu_kinase"/>
</dbReference>
<dbReference type="InterPro" id="IPR041727">
    <property type="entry name" value="NAGK-C"/>
</dbReference>
<dbReference type="NCBIfam" id="TIGR00761">
    <property type="entry name" value="argB"/>
    <property type="match status" value="1"/>
</dbReference>
<dbReference type="PANTHER" id="PTHR23342">
    <property type="entry name" value="N-ACETYLGLUTAMATE SYNTHASE"/>
    <property type="match status" value="1"/>
</dbReference>
<dbReference type="PANTHER" id="PTHR23342:SF0">
    <property type="entry name" value="N-ACETYLGLUTAMATE SYNTHASE, MITOCHONDRIAL"/>
    <property type="match status" value="1"/>
</dbReference>
<dbReference type="Pfam" id="PF00696">
    <property type="entry name" value="AA_kinase"/>
    <property type="match status" value="1"/>
</dbReference>
<dbReference type="PIRSF" id="PIRSF000728">
    <property type="entry name" value="NAGK"/>
    <property type="match status" value="1"/>
</dbReference>
<dbReference type="PRINTS" id="PR00474">
    <property type="entry name" value="GLU5KINASE"/>
</dbReference>
<dbReference type="SUPFAM" id="SSF53633">
    <property type="entry name" value="Carbamate kinase-like"/>
    <property type="match status" value="1"/>
</dbReference>
<accession>Q828A4</accession>
<evidence type="ECO:0000255" key="1">
    <source>
        <dbReference type="HAMAP-Rule" id="MF_00082"/>
    </source>
</evidence>
<gene>
    <name evidence="1" type="primary">argB</name>
    <name type="ordered locus">SAV_6765</name>
</gene>
<feature type="chain" id="PRO_0000112670" description="Acetylglutamate kinase">
    <location>
        <begin position="1"/>
        <end position="304"/>
    </location>
</feature>
<feature type="binding site" evidence="1">
    <location>
        <begin position="71"/>
        <end position="72"/>
    </location>
    <ligand>
        <name>substrate</name>
    </ligand>
</feature>
<feature type="binding site" evidence="1">
    <location>
        <position position="93"/>
    </location>
    <ligand>
        <name>substrate</name>
    </ligand>
</feature>
<feature type="binding site" evidence="1">
    <location>
        <position position="193"/>
    </location>
    <ligand>
        <name>substrate</name>
    </ligand>
</feature>
<feature type="site" description="Transition state stabilizer" evidence="1">
    <location>
        <position position="36"/>
    </location>
</feature>
<feature type="site" description="Transition state stabilizer" evidence="1">
    <location>
        <position position="254"/>
    </location>
</feature>
<comment type="function">
    <text evidence="1">Catalyzes the ATP-dependent phosphorylation of N-acetyl-L-glutamate.</text>
</comment>
<comment type="catalytic activity">
    <reaction evidence="1">
        <text>N-acetyl-L-glutamate + ATP = N-acetyl-L-glutamyl 5-phosphate + ADP</text>
        <dbReference type="Rhea" id="RHEA:14629"/>
        <dbReference type="ChEBI" id="CHEBI:30616"/>
        <dbReference type="ChEBI" id="CHEBI:44337"/>
        <dbReference type="ChEBI" id="CHEBI:57936"/>
        <dbReference type="ChEBI" id="CHEBI:456216"/>
        <dbReference type="EC" id="2.7.2.8"/>
    </reaction>
</comment>
<comment type="pathway">
    <text evidence="1">Amino-acid biosynthesis; L-arginine biosynthesis; N(2)-acetyl-L-ornithine from L-glutamate: step 2/4.</text>
</comment>
<comment type="subcellular location">
    <subcellularLocation>
        <location evidence="1">Cytoplasm</location>
    </subcellularLocation>
</comment>
<comment type="similarity">
    <text evidence="1">Belongs to the acetylglutamate kinase family. ArgB subfamily.</text>
</comment>
<name>ARGB_STRAW</name>